<feature type="chain" id="PRO_0000169502" description="Uncharacterized protein YhdV">
    <location>
        <begin position="1"/>
        <end position="73"/>
    </location>
</feature>
<feature type="transmembrane region" description="Helical" evidence="1">
    <location>
        <begin position="4"/>
        <end position="24"/>
    </location>
</feature>
<feature type="transmembrane region" description="Helical" evidence="1">
    <location>
        <begin position="51"/>
        <end position="71"/>
    </location>
</feature>
<accession>P64622</accession>
<accession>P45765</accession>
<accession>Q2M8U8</accession>
<evidence type="ECO:0000255" key="1"/>
<evidence type="ECO:0000255" key="2">
    <source>
        <dbReference type="PROSITE-ProRule" id="PRU00303"/>
    </source>
</evidence>
<evidence type="ECO:0000305" key="3"/>
<name>YHDV_ECOLI</name>
<proteinExistence type="inferred from homology"/>
<sequence>MKRLIPVALLTALLAGCAHDSPCVPVYDDQGRLVHTNTCMKGTTQDNWETAGAIAGGAAAVAGLTMGIIALSK</sequence>
<organism>
    <name type="scientific">Escherichia coli (strain K12)</name>
    <dbReference type="NCBI Taxonomy" id="83333"/>
    <lineage>
        <taxon>Bacteria</taxon>
        <taxon>Pseudomonadati</taxon>
        <taxon>Pseudomonadota</taxon>
        <taxon>Gammaproteobacteria</taxon>
        <taxon>Enterobacterales</taxon>
        <taxon>Enterobacteriaceae</taxon>
        <taxon>Escherichia</taxon>
    </lineage>
</organism>
<comment type="subcellular location">
    <subcellularLocation>
        <location evidence="2">Cell membrane</location>
        <topology evidence="3">Multi-pass membrane protein</topology>
    </subcellularLocation>
</comment>
<dbReference type="EMBL" id="U18997">
    <property type="protein sequence ID" value="AAA58071.1"/>
    <property type="molecule type" value="Genomic_DNA"/>
</dbReference>
<dbReference type="EMBL" id="U00096">
    <property type="protein sequence ID" value="AAC76299.1"/>
    <property type="molecule type" value="Genomic_DNA"/>
</dbReference>
<dbReference type="EMBL" id="AP009048">
    <property type="protein sequence ID" value="BAE77308.1"/>
    <property type="molecule type" value="Genomic_DNA"/>
</dbReference>
<dbReference type="PIR" id="E65119">
    <property type="entry name" value="E65119"/>
</dbReference>
<dbReference type="RefSeq" id="NP_417733.1">
    <property type="nucleotide sequence ID" value="NC_000913.3"/>
</dbReference>
<dbReference type="RefSeq" id="WP_000825639.1">
    <property type="nucleotide sequence ID" value="NZ_STEB01000012.1"/>
</dbReference>
<dbReference type="BioGRID" id="4263033">
    <property type="interactions" value="89"/>
</dbReference>
<dbReference type="FunCoup" id="P64622">
    <property type="interactions" value="366"/>
</dbReference>
<dbReference type="STRING" id="511145.b3267"/>
<dbReference type="jPOST" id="P64622"/>
<dbReference type="PaxDb" id="511145-b3267"/>
<dbReference type="EnsemblBacteria" id="AAC76299">
    <property type="protein sequence ID" value="AAC76299"/>
    <property type="gene ID" value="b3267"/>
</dbReference>
<dbReference type="GeneID" id="947767"/>
<dbReference type="KEGG" id="ecj:JW3235"/>
<dbReference type="KEGG" id="eco:b3267"/>
<dbReference type="KEGG" id="ecoc:C3026_17770"/>
<dbReference type="PATRIC" id="fig|1411691.4.peg.3461"/>
<dbReference type="EchoBASE" id="EB2682"/>
<dbReference type="eggNOG" id="ENOG5032RY2">
    <property type="taxonomic scope" value="Bacteria"/>
</dbReference>
<dbReference type="HOGENOM" id="CLU_182391_0_0_6"/>
<dbReference type="InParanoid" id="P64622"/>
<dbReference type="OMA" id="VHTNTCV"/>
<dbReference type="OrthoDB" id="6496718at2"/>
<dbReference type="PhylomeDB" id="P64622"/>
<dbReference type="BioCyc" id="EcoCyc:G7695-MONOMER"/>
<dbReference type="PRO" id="PR:P64622"/>
<dbReference type="Proteomes" id="UP000000625">
    <property type="component" value="Chromosome"/>
</dbReference>
<dbReference type="GO" id="GO:0005886">
    <property type="term" value="C:plasma membrane"/>
    <property type="evidence" value="ECO:0007669"/>
    <property type="project" value="UniProtKB-SubCell"/>
</dbReference>
<dbReference type="PROSITE" id="PS51257">
    <property type="entry name" value="PROKAR_LIPOPROTEIN"/>
    <property type="match status" value="1"/>
</dbReference>
<protein>
    <recommendedName>
        <fullName>Uncharacterized protein YhdV</fullName>
    </recommendedName>
</protein>
<keyword id="KW-1003">Cell membrane</keyword>
<keyword id="KW-0472">Membrane</keyword>
<keyword id="KW-1185">Reference proteome</keyword>
<keyword id="KW-0812">Transmembrane</keyword>
<keyword id="KW-1133">Transmembrane helix</keyword>
<reference key="1">
    <citation type="journal article" date="1997" name="Science">
        <title>The complete genome sequence of Escherichia coli K-12.</title>
        <authorList>
            <person name="Blattner F.R."/>
            <person name="Plunkett G. III"/>
            <person name="Bloch C.A."/>
            <person name="Perna N.T."/>
            <person name="Burland V."/>
            <person name="Riley M."/>
            <person name="Collado-Vides J."/>
            <person name="Glasner J.D."/>
            <person name="Rode C.K."/>
            <person name="Mayhew G.F."/>
            <person name="Gregor J."/>
            <person name="Davis N.W."/>
            <person name="Kirkpatrick H.A."/>
            <person name="Goeden M.A."/>
            <person name="Rose D.J."/>
            <person name="Mau B."/>
            <person name="Shao Y."/>
        </authorList>
    </citation>
    <scope>NUCLEOTIDE SEQUENCE [LARGE SCALE GENOMIC DNA]</scope>
    <source>
        <strain>K12 / MG1655 / ATCC 47076</strain>
    </source>
</reference>
<reference key="2">
    <citation type="journal article" date="2006" name="Mol. Syst. Biol.">
        <title>Highly accurate genome sequences of Escherichia coli K-12 strains MG1655 and W3110.</title>
        <authorList>
            <person name="Hayashi K."/>
            <person name="Morooka N."/>
            <person name="Yamamoto Y."/>
            <person name="Fujita K."/>
            <person name="Isono K."/>
            <person name="Choi S."/>
            <person name="Ohtsubo E."/>
            <person name="Baba T."/>
            <person name="Wanner B.L."/>
            <person name="Mori H."/>
            <person name="Horiuchi T."/>
        </authorList>
    </citation>
    <scope>NUCLEOTIDE SEQUENCE [LARGE SCALE GENOMIC DNA]</scope>
    <source>
        <strain>K12 / W3110 / ATCC 27325 / DSM 5911</strain>
    </source>
</reference>
<gene>
    <name type="primary">yhdV</name>
    <name type="ordered locus">b3267</name>
    <name type="ordered locus">JW3235</name>
</gene>